<feature type="chain" id="PRO_0000173576" description="Transaldolase">
    <location>
        <begin position="1"/>
        <end position="321"/>
    </location>
</feature>
<feature type="active site" description="Schiff-base intermediate with substrate" evidence="2">
    <location>
        <position position="132"/>
    </location>
</feature>
<keyword id="KW-0963">Cytoplasm</keyword>
<keyword id="KW-0570">Pentose shunt</keyword>
<keyword id="KW-1185">Reference proteome</keyword>
<keyword id="KW-0704">Schiff base</keyword>
<keyword id="KW-0808">Transferase</keyword>
<evidence type="ECO:0000250" key="1"/>
<evidence type="ECO:0000255" key="2">
    <source>
        <dbReference type="HAMAP-Rule" id="MF_00492"/>
    </source>
</evidence>
<reference key="1">
    <citation type="journal article" date="2001" name="Science">
        <title>The genome of the natural genetic engineer Agrobacterium tumefaciens C58.</title>
        <authorList>
            <person name="Wood D.W."/>
            <person name="Setubal J.C."/>
            <person name="Kaul R."/>
            <person name="Monks D.E."/>
            <person name="Kitajima J.P."/>
            <person name="Okura V.K."/>
            <person name="Zhou Y."/>
            <person name="Chen L."/>
            <person name="Wood G.E."/>
            <person name="Almeida N.F. Jr."/>
            <person name="Woo L."/>
            <person name="Chen Y."/>
            <person name="Paulsen I.T."/>
            <person name="Eisen J.A."/>
            <person name="Karp P.D."/>
            <person name="Bovee D. Sr."/>
            <person name="Chapman P."/>
            <person name="Clendenning J."/>
            <person name="Deatherage G."/>
            <person name="Gillet W."/>
            <person name="Grant C."/>
            <person name="Kutyavin T."/>
            <person name="Levy R."/>
            <person name="Li M.-J."/>
            <person name="McClelland E."/>
            <person name="Palmieri A."/>
            <person name="Raymond C."/>
            <person name="Rouse G."/>
            <person name="Saenphimmachak C."/>
            <person name="Wu Z."/>
            <person name="Romero P."/>
            <person name="Gordon D."/>
            <person name="Zhang S."/>
            <person name="Yoo H."/>
            <person name="Tao Y."/>
            <person name="Biddle P."/>
            <person name="Jung M."/>
            <person name="Krespan W."/>
            <person name="Perry M."/>
            <person name="Gordon-Kamm B."/>
            <person name="Liao L."/>
            <person name="Kim S."/>
            <person name="Hendrick C."/>
            <person name="Zhao Z.-Y."/>
            <person name="Dolan M."/>
            <person name="Chumley F."/>
            <person name="Tingey S.V."/>
            <person name="Tomb J.-F."/>
            <person name="Gordon M.P."/>
            <person name="Olson M.V."/>
            <person name="Nester E.W."/>
        </authorList>
    </citation>
    <scope>NUCLEOTIDE SEQUENCE [LARGE SCALE GENOMIC DNA]</scope>
    <source>
        <strain>C58 / ATCC 33970</strain>
    </source>
</reference>
<reference key="2">
    <citation type="journal article" date="2001" name="Science">
        <title>Genome sequence of the plant pathogen and biotechnology agent Agrobacterium tumefaciens C58.</title>
        <authorList>
            <person name="Goodner B."/>
            <person name="Hinkle G."/>
            <person name="Gattung S."/>
            <person name="Miller N."/>
            <person name="Blanchard M."/>
            <person name="Qurollo B."/>
            <person name="Goldman B.S."/>
            <person name="Cao Y."/>
            <person name="Askenazi M."/>
            <person name="Halling C."/>
            <person name="Mullin L."/>
            <person name="Houmiel K."/>
            <person name="Gordon J."/>
            <person name="Vaudin M."/>
            <person name="Iartchouk O."/>
            <person name="Epp A."/>
            <person name="Liu F."/>
            <person name="Wollam C."/>
            <person name="Allinger M."/>
            <person name="Doughty D."/>
            <person name="Scott C."/>
            <person name="Lappas C."/>
            <person name="Markelz B."/>
            <person name="Flanagan C."/>
            <person name="Crowell C."/>
            <person name="Gurson J."/>
            <person name="Lomo C."/>
            <person name="Sear C."/>
            <person name="Strub G."/>
            <person name="Cielo C."/>
            <person name="Slater S."/>
        </authorList>
    </citation>
    <scope>NUCLEOTIDE SEQUENCE [LARGE SCALE GENOMIC DNA]</scope>
    <source>
        <strain>C58 / ATCC 33970</strain>
    </source>
</reference>
<gene>
    <name evidence="2" type="primary">tal</name>
    <name type="synonym">talB</name>
    <name type="ordered locus">Atu4464</name>
    <name type="ORF">AGR_L_812</name>
</gene>
<protein>
    <recommendedName>
        <fullName evidence="2">Transaldolase</fullName>
        <ecNumber evidence="2">2.2.1.2</ecNumber>
    </recommendedName>
</protein>
<dbReference type="EC" id="2.2.1.2" evidence="2"/>
<dbReference type="EMBL" id="AE007870">
    <property type="protein sequence ID" value="AAK88978.1"/>
    <property type="molecule type" value="Genomic_DNA"/>
</dbReference>
<dbReference type="PIR" id="AD3105">
    <property type="entry name" value="AD3105"/>
</dbReference>
<dbReference type="PIR" id="H98181">
    <property type="entry name" value="H98181"/>
</dbReference>
<dbReference type="RefSeq" id="NP_356193.1">
    <property type="nucleotide sequence ID" value="NC_003063.2"/>
</dbReference>
<dbReference type="RefSeq" id="WP_006309875.1">
    <property type="nucleotide sequence ID" value="NC_003063.2"/>
</dbReference>
<dbReference type="SMR" id="Q8U7I5"/>
<dbReference type="STRING" id="176299.Atu4464"/>
<dbReference type="EnsemblBacteria" id="AAK88978">
    <property type="protein sequence ID" value="AAK88978"/>
    <property type="gene ID" value="Atu4464"/>
</dbReference>
<dbReference type="GeneID" id="1136338"/>
<dbReference type="KEGG" id="atu:Atu4464"/>
<dbReference type="PATRIC" id="fig|176299.10.peg.4271"/>
<dbReference type="eggNOG" id="COG0176">
    <property type="taxonomic scope" value="Bacteria"/>
</dbReference>
<dbReference type="HOGENOM" id="CLU_047470_0_1_5"/>
<dbReference type="OrthoDB" id="9809101at2"/>
<dbReference type="PhylomeDB" id="Q8U7I5"/>
<dbReference type="BioCyc" id="AGRO:ATU4464-MONOMER"/>
<dbReference type="UniPathway" id="UPA00115">
    <property type="reaction ID" value="UER00414"/>
</dbReference>
<dbReference type="Proteomes" id="UP000000813">
    <property type="component" value="Chromosome linear"/>
</dbReference>
<dbReference type="GO" id="GO:0005829">
    <property type="term" value="C:cytosol"/>
    <property type="evidence" value="ECO:0007669"/>
    <property type="project" value="TreeGrafter"/>
</dbReference>
<dbReference type="GO" id="GO:0004801">
    <property type="term" value="F:transaldolase activity"/>
    <property type="evidence" value="ECO:0000250"/>
    <property type="project" value="UniProtKB"/>
</dbReference>
<dbReference type="GO" id="GO:0005975">
    <property type="term" value="P:carbohydrate metabolic process"/>
    <property type="evidence" value="ECO:0007669"/>
    <property type="project" value="InterPro"/>
</dbReference>
<dbReference type="GO" id="GO:0006098">
    <property type="term" value="P:pentose-phosphate shunt"/>
    <property type="evidence" value="ECO:0007669"/>
    <property type="project" value="UniProtKB-UniRule"/>
</dbReference>
<dbReference type="CDD" id="cd00957">
    <property type="entry name" value="Transaldolase_TalAB"/>
    <property type="match status" value="1"/>
</dbReference>
<dbReference type="FunFam" id="3.20.20.70:FF:000131">
    <property type="entry name" value="Transaldolase"/>
    <property type="match status" value="1"/>
</dbReference>
<dbReference type="Gene3D" id="3.20.20.70">
    <property type="entry name" value="Aldolase class I"/>
    <property type="match status" value="1"/>
</dbReference>
<dbReference type="HAMAP" id="MF_00492">
    <property type="entry name" value="Transaldolase_1"/>
    <property type="match status" value="1"/>
</dbReference>
<dbReference type="InterPro" id="IPR013785">
    <property type="entry name" value="Aldolase_TIM"/>
</dbReference>
<dbReference type="InterPro" id="IPR001585">
    <property type="entry name" value="TAL/FSA"/>
</dbReference>
<dbReference type="InterPro" id="IPR004730">
    <property type="entry name" value="Transaldolase_1"/>
</dbReference>
<dbReference type="InterPro" id="IPR018225">
    <property type="entry name" value="Transaldolase_AS"/>
</dbReference>
<dbReference type="NCBIfam" id="TIGR00874">
    <property type="entry name" value="talAB"/>
    <property type="match status" value="1"/>
</dbReference>
<dbReference type="PANTHER" id="PTHR10683">
    <property type="entry name" value="TRANSALDOLASE"/>
    <property type="match status" value="1"/>
</dbReference>
<dbReference type="PANTHER" id="PTHR10683:SF18">
    <property type="entry name" value="TRANSALDOLASE"/>
    <property type="match status" value="1"/>
</dbReference>
<dbReference type="Pfam" id="PF00923">
    <property type="entry name" value="TAL_FSA"/>
    <property type="match status" value="1"/>
</dbReference>
<dbReference type="SUPFAM" id="SSF51569">
    <property type="entry name" value="Aldolase"/>
    <property type="match status" value="1"/>
</dbReference>
<dbReference type="PROSITE" id="PS01054">
    <property type="entry name" value="TRANSALDOLASE_1"/>
    <property type="match status" value="1"/>
</dbReference>
<dbReference type="PROSITE" id="PS00958">
    <property type="entry name" value="TRANSALDOLASE_2"/>
    <property type="match status" value="1"/>
</dbReference>
<name>TAL_AGRFC</name>
<accession>Q8U7I5</accession>
<proteinExistence type="inferred from homology"/>
<comment type="function">
    <text evidence="2">Transaldolase is important for the balance of metabolites in the pentose-phosphate pathway.</text>
</comment>
<comment type="catalytic activity">
    <reaction evidence="2">
        <text>D-sedoheptulose 7-phosphate + D-glyceraldehyde 3-phosphate = D-erythrose 4-phosphate + beta-D-fructose 6-phosphate</text>
        <dbReference type="Rhea" id="RHEA:17053"/>
        <dbReference type="ChEBI" id="CHEBI:16897"/>
        <dbReference type="ChEBI" id="CHEBI:57483"/>
        <dbReference type="ChEBI" id="CHEBI:57634"/>
        <dbReference type="ChEBI" id="CHEBI:59776"/>
        <dbReference type="EC" id="2.2.1.2"/>
    </reaction>
</comment>
<comment type="pathway">
    <text evidence="2">Carbohydrate degradation; pentose phosphate pathway; D-glyceraldehyde 3-phosphate and beta-D-fructose 6-phosphate from D-ribose 5-phosphate and D-xylulose 5-phosphate (non-oxidative stage): step 2/3.</text>
</comment>
<comment type="subunit">
    <text evidence="1">Homodimer.</text>
</comment>
<comment type="subcellular location">
    <subcellularLocation>
        <location evidence="2">Cytoplasm</location>
    </subcellularLocation>
</comment>
<comment type="similarity">
    <text evidence="2">Belongs to the transaldolase family. Type 1 subfamily.</text>
</comment>
<organism>
    <name type="scientific">Agrobacterium fabrum (strain C58 / ATCC 33970)</name>
    <name type="common">Agrobacterium tumefaciens (strain C58)</name>
    <dbReference type="NCBI Taxonomy" id="176299"/>
    <lineage>
        <taxon>Bacteria</taxon>
        <taxon>Pseudomonadati</taxon>
        <taxon>Pseudomonadota</taxon>
        <taxon>Alphaproteobacteria</taxon>
        <taxon>Hyphomicrobiales</taxon>
        <taxon>Rhizobiaceae</taxon>
        <taxon>Rhizobium/Agrobacterium group</taxon>
        <taxon>Agrobacterium</taxon>
        <taxon>Agrobacterium tumefaciens complex</taxon>
    </lineage>
</organism>
<sequence length="321" mass="34496">MTSKLEQLRAITTVVADTGDIEAVARLKPVDCTTNPTIVLKALGTPAFADAVKEAVAWGRKQGGQSDAVVAAVADRLAISVGAALAGLVPGRVSTEVDADLSFDTQASITKARHIIASYKERGIERERILIKLASTWEGIKAAEVLQSEGIDCNLTLLFSQAQAIACAEAKAFLISPFVGRILDWYKKSTGETYTAETDPGVVSVRSIYNYYKANGIGTVVMGASFRNVGEIEALAGCDRLTISPALLEELDKDNGKLERKLSPDNVKAEALQSLDEKAFRWAMNEDAMATEKLSEGIRLFAKDLVTLREMVRKELTAAAA</sequence>